<accession>Q7HKY0</accession>
<feature type="chain" id="PRO_0000217102" description="Cytochrome b6-f complex subunit 8">
    <location>
        <begin position="1"/>
        <end position="29"/>
    </location>
</feature>
<feature type="transmembrane region" description="Helical" evidence="1">
    <location>
        <begin position="3"/>
        <end position="23"/>
    </location>
</feature>
<comment type="function">
    <text evidence="1">Component of the cytochrome b6-f complex, which mediates electron transfer between photosystem II (PSII) and photosystem I (PSI), cyclic electron flow around PSI, and state transitions.</text>
</comment>
<comment type="subunit">
    <text evidence="1">The 4 large subunits of the cytochrome b6-f complex are cytochrome b6, subunit IV (17 kDa polypeptide, PetD), cytochrome f and the Rieske protein, while the 4 small subunits are PetG, PetL, PetM and PetN. The complex functions as a dimer.</text>
</comment>
<comment type="subcellular location">
    <subcellularLocation>
        <location evidence="1">Plastid</location>
        <location evidence="1">Chloroplast thylakoid membrane</location>
        <topology evidence="1">Single-pass membrane protein</topology>
    </subcellularLocation>
</comment>
<comment type="similarity">
    <text evidence="1">Belongs to the PetN family.</text>
</comment>
<protein>
    <recommendedName>
        <fullName evidence="1">Cytochrome b6-f complex subunit 8</fullName>
    </recommendedName>
    <alternativeName>
        <fullName evidence="1">Cytochrome b6-f complex subunit PetN</fullName>
    </alternativeName>
    <alternativeName>
        <fullName evidence="1">Cytochrome b6-f complex subunit VIII</fullName>
    </alternativeName>
</protein>
<geneLocation type="chloroplast"/>
<proteinExistence type="inferred from homology"/>
<gene>
    <name evidence="1" type="primary">petN</name>
</gene>
<keyword id="KW-0150">Chloroplast</keyword>
<keyword id="KW-0249">Electron transport</keyword>
<keyword id="KW-0472">Membrane</keyword>
<keyword id="KW-0602">Photosynthesis</keyword>
<keyword id="KW-0934">Plastid</keyword>
<keyword id="KW-0793">Thylakoid</keyword>
<keyword id="KW-0812">Transmembrane</keyword>
<keyword id="KW-1133">Transmembrane helix</keyword>
<keyword id="KW-0813">Transport</keyword>
<reference key="1">
    <citation type="journal article" date="2003" name="Plant Syst. Evol.">
        <title>The chloroplast genome of the 'basal' angiosperm Calycanthus fertilis -- structural and phylogenetic analyses.</title>
        <authorList>
            <person name="Goremykin V."/>
            <person name="Hirsch-Ernst K.I."/>
            <person name="Woelfl S."/>
            <person name="Hellwig F.H."/>
        </authorList>
    </citation>
    <scope>NUCLEOTIDE SEQUENCE [LARGE SCALE GENOMIC DNA]</scope>
</reference>
<sequence length="29" mass="3170">MDIVSLAWAALMVVFTFSLSLVVWGRSGL</sequence>
<name>PETN_CALFG</name>
<dbReference type="EMBL" id="AJ428413">
    <property type="protein sequence ID" value="CAD28714.1"/>
    <property type="molecule type" value="Genomic_DNA"/>
</dbReference>
<dbReference type="RefSeq" id="NP_862747.1">
    <property type="nucleotide sequence ID" value="NC_004993.1"/>
</dbReference>
<dbReference type="SMR" id="Q7HKY0"/>
<dbReference type="GeneID" id="2598094"/>
<dbReference type="GO" id="GO:0009535">
    <property type="term" value="C:chloroplast thylakoid membrane"/>
    <property type="evidence" value="ECO:0007669"/>
    <property type="project" value="UniProtKB-SubCell"/>
</dbReference>
<dbReference type="GO" id="GO:0009512">
    <property type="term" value="C:cytochrome b6f complex"/>
    <property type="evidence" value="ECO:0007669"/>
    <property type="project" value="InterPro"/>
</dbReference>
<dbReference type="GO" id="GO:0045158">
    <property type="term" value="F:electron transporter, transferring electrons within cytochrome b6/f complex of photosystem II activity"/>
    <property type="evidence" value="ECO:0007669"/>
    <property type="project" value="InterPro"/>
</dbReference>
<dbReference type="GO" id="GO:0017004">
    <property type="term" value="P:cytochrome complex assembly"/>
    <property type="evidence" value="ECO:0007669"/>
    <property type="project" value="UniProtKB-UniRule"/>
</dbReference>
<dbReference type="GO" id="GO:0015979">
    <property type="term" value="P:photosynthesis"/>
    <property type="evidence" value="ECO:0007669"/>
    <property type="project" value="UniProtKB-KW"/>
</dbReference>
<dbReference type="HAMAP" id="MF_00395">
    <property type="entry name" value="Cytb6_f_PetN"/>
    <property type="match status" value="1"/>
</dbReference>
<dbReference type="InterPro" id="IPR036143">
    <property type="entry name" value="Cytochr_b6-f_cplx_su8_sf"/>
</dbReference>
<dbReference type="InterPro" id="IPR005497">
    <property type="entry name" value="Cytochrome_b6-f_cplx_su8"/>
</dbReference>
<dbReference type="Pfam" id="PF03742">
    <property type="entry name" value="PetN"/>
    <property type="match status" value="1"/>
</dbReference>
<dbReference type="SUPFAM" id="SSF103451">
    <property type="entry name" value="PetN subunit of the cytochrome b6f complex"/>
    <property type="match status" value="1"/>
</dbReference>
<evidence type="ECO:0000255" key="1">
    <source>
        <dbReference type="HAMAP-Rule" id="MF_00395"/>
    </source>
</evidence>
<organism>
    <name type="scientific">Calycanthus floridus var. glaucus</name>
    <name type="common">Eastern sweetshrub</name>
    <name type="synonym">Calycanthus fertilis var. ferax</name>
    <dbReference type="NCBI Taxonomy" id="212734"/>
    <lineage>
        <taxon>Eukaryota</taxon>
        <taxon>Viridiplantae</taxon>
        <taxon>Streptophyta</taxon>
        <taxon>Embryophyta</taxon>
        <taxon>Tracheophyta</taxon>
        <taxon>Spermatophyta</taxon>
        <taxon>Magnoliopsida</taxon>
        <taxon>Magnoliidae</taxon>
        <taxon>Laurales</taxon>
        <taxon>Calycanthaceae</taxon>
        <taxon>Calycanthus</taxon>
    </lineage>
</organism>